<organism>
    <name type="scientific">Haemophilus influenzae (strain 86-028NP)</name>
    <dbReference type="NCBI Taxonomy" id="281310"/>
    <lineage>
        <taxon>Bacteria</taxon>
        <taxon>Pseudomonadati</taxon>
        <taxon>Pseudomonadota</taxon>
        <taxon>Gammaproteobacteria</taxon>
        <taxon>Pasteurellales</taxon>
        <taxon>Pasteurellaceae</taxon>
        <taxon>Haemophilus</taxon>
    </lineage>
</organism>
<comment type="function">
    <text evidence="1">Part of the twin-arginine translocation (Tat) system that transports large folded proteins containing a characteristic twin-arginine motif in their signal peptide across membranes. Together with TatC, TatB is part of a receptor directly interacting with Tat signal peptides. TatB may form an oligomeric binding site that transiently accommodates folded Tat precursor proteins before their translocation.</text>
</comment>
<comment type="subunit">
    <text evidence="1">The Tat system comprises two distinct complexes: a TatABC complex, containing multiple copies of TatA, TatB and TatC subunits, and a separate TatA complex, containing only TatA subunits. Substrates initially bind to the TatABC complex, which probably triggers association of the separate TatA complex to form the active translocon.</text>
</comment>
<comment type="subcellular location">
    <subcellularLocation>
        <location evidence="1">Cell inner membrane</location>
        <topology evidence="1">Single-pass membrane protein</topology>
    </subcellularLocation>
</comment>
<comment type="similarity">
    <text evidence="1">Belongs to the TatB family.</text>
</comment>
<name>TATB_HAEI8</name>
<reference key="1">
    <citation type="journal article" date="2005" name="J. Bacteriol.">
        <title>Genomic sequence of an otitis media isolate of nontypeable Haemophilus influenzae: comparative study with H. influenzae serotype d, strain KW20.</title>
        <authorList>
            <person name="Harrison A."/>
            <person name="Dyer D.W."/>
            <person name="Gillaspy A."/>
            <person name="Ray W.C."/>
            <person name="Mungur R."/>
            <person name="Carson M.B."/>
            <person name="Zhong H."/>
            <person name="Gipson J."/>
            <person name="Gipson M."/>
            <person name="Johnson L.S."/>
            <person name="Lewis L."/>
            <person name="Bakaletz L.O."/>
            <person name="Munson R.S. Jr."/>
        </authorList>
    </citation>
    <scope>NUCLEOTIDE SEQUENCE [LARGE SCALE GENOMIC DNA]</scope>
    <source>
        <strain>86-028NP</strain>
    </source>
</reference>
<feature type="chain" id="PRO_0000301172" description="Sec-independent protein translocase protein TatB">
    <location>
        <begin position="1"/>
        <end position="186"/>
    </location>
</feature>
<feature type="transmembrane region" description="Helical" evidence="1">
    <location>
        <begin position="1"/>
        <end position="21"/>
    </location>
</feature>
<feature type="region of interest" description="Disordered" evidence="2">
    <location>
        <begin position="162"/>
        <end position="186"/>
    </location>
</feature>
<feature type="compositionally biased region" description="Polar residues" evidence="2">
    <location>
        <begin position="177"/>
        <end position="186"/>
    </location>
</feature>
<proteinExistence type="inferred from homology"/>
<keyword id="KW-0997">Cell inner membrane</keyword>
<keyword id="KW-1003">Cell membrane</keyword>
<keyword id="KW-0472">Membrane</keyword>
<keyword id="KW-0653">Protein transport</keyword>
<keyword id="KW-0811">Translocation</keyword>
<keyword id="KW-0812">Transmembrane</keyword>
<keyword id="KW-1133">Transmembrane helix</keyword>
<keyword id="KW-0813">Transport</keyword>
<gene>
    <name evidence="1" type="primary">tatB</name>
    <name type="ordered locus">NTHI0280</name>
</gene>
<dbReference type="EMBL" id="CP000057">
    <property type="protein sequence ID" value="AAX87244.1"/>
    <property type="molecule type" value="Genomic_DNA"/>
</dbReference>
<dbReference type="RefSeq" id="WP_005688082.1">
    <property type="nucleotide sequence ID" value="NC_007146.2"/>
</dbReference>
<dbReference type="SMR" id="Q4QP03"/>
<dbReference type="GeneID" id="93219123"/>
<dbReference type="KEGG" id="hit:NTHI0280"/>
<dbReference type="HOGENOM" id="CLU_086034_1_0_6"/>
<dbReference type="Proteomes" id="UP000002525">
    <property type="component" value="Chromosome"/>
</dbReference>
<dbReference type="GO" id="GO:0033281">
    <property type="term" value="C:TAT protein transport complex"/>
    <property type="evidence" value="ECO:0007669"/>
    <property type="project" value="UniProtKB-UniRule"/>
</dbReference>
<dbReference type="GO" id="GO:0008320">
    <property type="term" value="F:protein transmembrane transporter activity"/>
    <property type="evidence" value="ECO:0007669"/>
    <property type="project" value="UniProtKB-UniRule"/>
</dbReference>
<dbReference type="GO" id="GO:0043953">
    <property type="term" value="P:protein transport by the Tat complex"/>
    <property type="evidence" value="ECO:0007669"/>
    <property type="project" value="UniProtKB-UniRule"/>
</dbReference>
<dbReference type="Gene3D" id="1.20.5.3310">
    <property type="match status" value="1"/>
</dbReference>
<dbReference type="HAMAP" id="MF_00237">
    <property type="entry name" value="TatB"/>
    <property type="match status" value="1"/>
</dbReference>
<dbReference type="InterPro" id="IPR018448">
    <property type="entry name" value="TatB"/>
</dbReference>
<dbReference type="NCBIfam" id="TIGR01410">
    <property type="entry name" value="tatB"/>
    <property type="match status" value="1"/>
</dbReference>
<dbReference type="PANTHER" id="PTHR33162">
    <property type="entry name" value="SEC-INDEPENDENT PROTEIN TRANSLOCASE PROTEIN TATA, CHLOROPLASTIC"/>
    <property type="match status" value="1"/>
</dbReference>
<dbReference type="PANTHER" id="PTHR33162:SF1">
    <property type="entry name" value="SEC-INDEPENDENT PROTEIN TRANSLOCASE PROTEIN TATA, CHLOROPLASTIC"/>
    <property type="match status" value="1"/>
</dbReference>
<dbReference type="PRINTS" id="PR01506">
    <property type="entry name" value="TATBPROTEIN"/>
</dbReference>
<protein>
    <recommendedName>
        <fullName evidence="1">Sec-independent protein translocase protein TatB</fullName>
    </recommendedName>
</protein>
<accession>Q4QP03</accession>
<sequence length="186" mass="20439">MFDIGFSELILLMVLGLVVLGPKRLPIAIRTVMDWVKTIRGLAANVQNELKQELKLQELQDSIKKAESLNLQALSPELSKTVEELKAQADKMKAELEDKAAQAGTTVEDQIKEIKNAAENAEKPQNAISVEEAAETLSEAEKTPTDLTALETHEKVELNTHLSSYYPPDDIEIAPASKSQSSKTKS</sequence>
<evidence type="ECO:0000255" key="1">
    <source>
        <dbReference type="HAMAP-Rule" id="MF_00237"/>
    </source>
</evidence>
<evidence type="ECO:0000256" key="2">
    <source>
        <dbReference type="SAM" id="MobiDB-lite"/>
    </source>
</evidence>